<name>NUDC_CITK8</name>
<accession>A8AKS7</accession>
<dbReference type="EC" id="3.6.1.-" evidence="1"/>
<dbReference type="EC" id="3.6.1.22" evidence="1"/>
<dbReference type="EMBL" id="CP000822">
    <property type="protein sequence ID" value="ABV14090.1"/>
    <property type="molecule type" value="Genomic_DNA"/>
</dbReference>
<dbReference type="RefSeq" id="WP_012133799.1">
    <property type="nucleotide sequence ID" value="NC_009792.1"/>
</dbReference>
<dbReference type="SMR" id="A8AKS7"/>
<dbReference type="STRING" id="290338.CKO_02990"/>
<dbReference type="GeneID" id="45136804"/>
<dbReference type="KEGG" id="cko:CKO_02990"/>
<dbReference type="HOGENOM" id="CLU_037162_0_1_6"/>
<dbReference type="OrthoDB" id="9791656at2"/>
<dbReference type="Proteomes" id="UP000008148">
    <property type="component" value="Chromosome"/>
</dbReference>
<dbReference type="GO" id="GO:0005829">
    <property type="term" value="C:cytosol"/>
    <property type="evidence" value="ECO:0007669"/>
    <property type="project" value="TreeGrafter"/>
</dbReference>
<dbReference type="GO" id="GO:0000287">
    <property type="term" value="F:magnesium ion binding"/>
    <property type="evidence" value="ECO:0007669"/>
    <property type="project" value="UniProtKB-UniRule"/>
</dbReference>
<dbReference type="GO" id="GO:0030145">
    <property type="term" value="F:manganese ion binding"/>
    <property type="evidence" value="ECO:0007669"/>
    <property type="project" value="UniProtKB-UniRule"/>
</dbReference>
<dbReference type="GO" id="GO:0000210">
    <property type="term" value="F:NAD+ diphosphatase activity"/>
    <property type="evidence" value="ECO:0007669"/>
    <property type="project" value="UniProtKB-UniRule"/>
</dbReference>
<dbReference type="GO" id="GO:0035529">
    <property type="term" value="F:NADH pyrophosphatase activity"/>
    <property type="evidence" value="ECO:0007669"/>
    <property type="project" value="TreeGrafter"/>
</dbReference>
<dbReference type="GO" id="GO:0110153">
    <property type="term" value="F:RNA NAD-cap (NMN-forming) hydrolase activity"/>
    <property type="evidence" value="ECO:0007669"/>
    <property type="project" value="RHEA"/>
</dbReference>
<dbReference type="GO" id="GO:0008270">
    <property type="term" value="F:zinc ion binding"/>
    <property type="evidence" value="ECO:0007669"/>
    <property type="project" value="UniProtKB-UniRule"/>
</dbReference>
<dbReference type="GO" id="GO:0019677">
    <property type="term" value="P:NAD catabolic process"/>
    <property type="evidence" value="ECO:0007669"/>
    <property type="project" value="TreeGrafter"/>
</dbReference>
<dbReference type="GO" id="GO:0006734">
    <property type="term" value="P:NADH metabolic process"/>
    <property type="evidence" value="ECO:0007669"/>
    <property type="project" value="TreeGrafter"/>
</dbReference>
<dbReference type="GO" id="GO:0006742">
    <property type="term" value="P:NADP catabolic process"/>
    <property type="evidence" value="ECO:0007669"/>
    <property type="project" value="TreeGrafter"/>
</dbReference>
<dbReference type="CDD" id="cd03429">
    <property type="entry name" value="NUDIX_NADH_pyrophosphatase_Nudt13"/>
    <property type="match status" value="1"/>
</dbReference>
<dbReference type="FunFam" id="3.90.79.10:FF:000004">
    <property type="entry name" value="NADH pyrophosphatase"/>
    <property type="match status" value="1"/>
</dbReference>
<dbReference type="FunFam" id="3.90.79.20:FF:000001">
    <property type="entry name" value="NADH pyrophosphatase"/>
    <property type="match status" value="1"/>
</dbReference>
<dbReference type="Gene3D" id="3.90.79.20">
    <property type="match status" value="1"/>
</dbReference>
<dbReference type="Gene3D" id="3.90.79.10">
    <property type="entry name" value="Nucleoside Triphosphate Pyrophosphohydrolase"/>
    <property type="match status" value="1"/>
</dbReference>
<dbReference type="HAMAP" id="MF_00297">
    <property type="entry name" value="Nudix_NudC"/>
    <property type="match status" value="1"/>
</dbReference>
<dbReference type="InterPro" id="IPR050241">
    <property type="entry name" value="NAD-cap_RNA_hydrolase_NudC"/>
</dbReference>
<dbReference type="InterPro" id="IPR049734">
    <property type="entry name" value="NudC-like_C"/>
</dbReference>
<dbReference type="InterPro" id="IPR015797">
    <property type="entry name" value="NUDIX_hydrolase-like_dom_sf"/>
</dbReference>
<dbReference type="InterPro" id="IPR020084">
    <property type="entry name" value="NUDIX_hydrolase_CS"/>
</dbReference>
<dbReference type="InterPro" id="IPR000086">
    <property type="entry name" value="NUDIX_hydrolase_dom"/>
</dbReference>
<dbReference type="InterPro" id="IPR022925">
    <property type="entry name" value="RNA_Hydrolase_NudC"/>
</dbReference>
<dbReference type="InterPro" id="IPR015376">
    <property type="entry name" value="Znr_NADH_PPase"/>
</dbReference>
<dbReference type="NCBIfam" id="NF001299">
    <property type="entry name" value="PRK00241.1"/>
    <property type="match status" value="1"/>
</dbReference>
<dbReference type="PANTHER" id="PTHR42904:SF6">
    <property type="entry name" value="NAD-CAPPED RNA HYDROLASE NUDT12"/>
    <property type="match status" value="1"/>
</dbReference>
<dbReference type="PANTHER" id="PTHR42904">
    <property type="entry name" value="NUDIX HYDROLASE, NUDC SUBFAMILY"/>
    <property type="match status" value="1"/>
</dbReference>
<dbReference type="Pfam" id="PF00293">
    <property type="entry name" value="NUDIX"/>
    <property type="match status" value="1"/>
</dbReference>
<dbReference type="Pfam" id="PF09297">
    <property type="entry name" value="Zn_ribbon_NUD"/>
    <property type="match status" value="1"/>
</dbReference>
<dbReference type="SUPFAM" id="SSF55811">
    <property type="entry name" value="Nudix"/>
    <property type="match status" value="2"/>
</dbReference>
<dbReference type="PROSITE" id="PS51462">
    <property type="entry name" value="NUDIX"/>
    <property type="match status" value="1"/>
</dbReference>
<dbReference type="PROSITE" id="PS00893">
    <property type="entry name" value="NUDIX_BOX"/>
    <property type="match status" value="1"/>
</dbReference>
<sequence>MDRIIEKLDHGWWIVSHEQKLWLPRGELPYGEATNFDLVGQRALLIGEWEGEPVWLVLQHRRHDMGSVRQVIDQDVGLFQLAGRGVQLAEFYRSHKFCGYCGHPMYPSKTEWAMLCSHCRERYYPQIAPCIIVAIRRADSILLAQHTRHRNGVHTVLAGFVEVGETLEQAVAREVMEESGIKVKNLRYVTSQPWPFPQSLMTAFMAEYDSGEIVIDPKELLEAGWYRYDDLPLLPPPGTVARRLIEDTVAMCRAEYE</sequence>
<feature type="chain" id="PRO_1000021903" description="NAD-capped RNA hydrolase NudC">
    <location>
        <begin position="1"/>
        <end position="257"/>
    </location>
</feature>
<feature type="domain" description="Nudix hydrolase" evidence="1">
    <location>
        <begin position="125"/>
        <end position="248"/>
    </location>
</feature>
<feature type="short sequence motif" description="Nudix box" evidence="1">
    <location>
        <begin position="159"/>
        <end position="180"/>
    </location>
</feature>
<feature type="binding site" evidence="1">
    <location>
        <position position="69"/>
    </location>
    <ligand>
        <name>substrate</name>
    </ligand>
</feature>
<feature type="binding site" evidence="1">
    <location>
        <position position="98"/>
    </location>
    <ligand>
        <name>Zn(2+)</name>
        <dbReference type="ChEBI" id="CHEBI:29105"/>
    </ligand>
</feature>
<feature type="binding site" evidence="1">
    <location>
        <position position="101"/>
    </location>
    <ligand>
        <name>Zn(2+)</name>
        <dbReference type="ChEBI" id="CHEBI:29105"/>
    </ligand>
</feature>
<feature type="binding site" evidence="1">
    <location>
        <position position="111"/>
    </location>
    <ligand>
        <name>substrate</name>
    </ligand>
</feature>
<feature type="binding site" evidence="1">
    <location>
        <position position="116"/>
    </location>
    <ligand>
        <name>Zn(2+)</name>
        <dbReference type="ChEBI" id="CHEBI:29105"/>
    </ligand>
</feature>
<feature type="binding site" evidence="1">
    <location>
        <position position="119"/>
    </location>
    <ligand>
        <name>Zn(2+)</name>
        <dbReference type="ChEBI" id="CHEBI:29105"/>
    </ligand>
</feature>
<feature type="binding site" evidence="1">
    <location>
        <position position="124"/>
    </location>
    <ligand>
        <name>substrate</name>
    </ligand>
</feature>
<feature type="binding site" evidence="1">
    <location>
        <position position="158"/>
    </location>
    <ligand>
        <name>a divalent metal cation</name>
        <dbReference type="ChEBI" id="CHEBI:60240"/>
        <label>1</label>
    </ligand>
</feature>
<feature type="binding site" evidence="1">
    <location>
        <position position="174"/>
    </location>
    <ligand>
        <name>a divalent metal cation</name>
        <dbReference type="ChEBI" id="CHEBI:60240"/>
        <label>2</label>
    </ligand>
</feature>
<feature type="binding site" evidence="1">
    <location>
        <position position="174"/>
    </location>
    <ligand>
        <name>a divalent metal cation</name>
        <dbReference type="ChEBI" id="CHEBI:60240"/>
        <label>3</label>
    </ligand>
</feature>
<feature type="binding site" evidence="1">
    <location>
        <position position="178"/>
    </location>
    <ligand>
        <name>a divalent metal cation</name>
        <dbReference type="ChEBI" id="CHEBI:60240"/>
        <label>1</label>
    </ligand>
</feature>
<feature type="binding site" evidence="1">
    <location>
        <position position="178"/>
    </location>
    <ligand>
        <name>a divalent metal cation</name>
        <dbReference type="ChEBI" id="CHEBI:60240"/>
        <label>3</label>
    </ligand>
</feature>
<feature type="binding site" evidence="1">
    <location>
        <begin position="192"/>
        <end position="199"/>
    </location>
    <ligand>
        <name>substrate</name>
    </ligand>
</feature>
<feature type="binding site" evidence="1">
    <location>
        <position position="219"/>
    </location>
    <ligand>
        <name>a divalent metal cation</name>
        <dbReference type="ChEBI" id="CHEBI:60240"/>
        <label>1</label>
    </ligand>
</feature>
<feature type="binding site" evidence="1">
    <location>
        <position position="219"/>
    </location>
    <ligand>
        <name>a divalent metal cation</name>
        <dbReference type="ChEBI" id="CHEBI:60240"/>
        <label>3</label>
    </ligand>
</feature>
<feature type="binding site" evidence="1">
    <location>
        <position position="241"/>
    </location>
    <ligand>
        <name>substrate</name>
    </ligand>
</feature>
<comment type="function">
    <text evidence="1">mRNA decapping enzyme that specifically removes the nicotinamide adenine dinucleotide (NAD) cap from a subset of mRNAs by hydrolyzing the diphosphate linkage to produce nicotinamide mononucleotide (NMN) and 5' monophosphate mRNA. The NAD-cap is present at the 5'-end of some mRNAs and stabilizes RNA against 5'-processing. Has preference for mRNAs with a 5'-end purine. Catalyzes the hydrolysis of a broad range of dinucleotide pyrophosphates.</text>
</comment>
<comment type="catalytic activity">
    <reaction evidence="1">
        <text>a 5'-end NAD(+)-phospho-ribonucleoside in mRNA + H2O = a 5'-end phospho-adenosine-phospho-ribonucleoside in mRNA + beta-nicotinamide D-ribonucleotide + 2 H(+)</text>
        <dbReference type="Rhea" id="RHEA:60876"/>
        <dbReference type="Rhea" id="RHEA-COMP:15698"/>
        <dbReference type="Rhea" id="RHEA-COMP:15719"/>
        <dbReference type="ChEBI" id="CHEBI:14649"/>
        <dbReference type="ChEBI" id="CHEBI:15377"/>
        <dbReference type="ChEBI" id="CHEBI:15378"/>
        <dbReference type="ChEBI" id="CHEBI:144029"/>
        <dbReference type="ChEBI" id="CHEBI:144051"/>
    </reaction>
    <physiologicalReaction direction="left-to-right" evidence="1">
        <dbReference type="Rhea" id="RHEA:60877"/>
    </physiologicalReaction>
</comment>
<comment type="catalytic activity">
    <reaction evidence="1">
        <text>NAD(+) + H2O = beta-nicotinamide D-ribonucleotide + AMP + 2 H(+)</text>
        <dbReference type="Rhea" id="RHEA:11800"/>
        <dbReference type="ChEBI" id="CHEBI:14649"/>
        <dbReference type="ChEBI" id="CHEBI:15377"/>
        <dbReference type="ChEBI" id="CHEBI:15378"/>
        <dbReference type="ChEBI" id="CHEBI:57540"/>
        <dbReference type="ChEBI" id="CHEBI:456215"/>
        <dbReference type="EC" id="3.6.1.22"/>
    </reaction>
</comment>
<comment type="catalytic activity">
    <reaction evidence="1">
        <text>NADH + H2O = reduced beta-nicotinamide D-ribonucleotide + AMP + 2 H(+)</text>
        <dbReference type="Rhea" id="RHEA:48868"/>
        <dbReference type="ChEBI" id="CHEBI:15377"/>
        <dbReference type="ChEBI" id="CHEBI:15378"/>
        <dbReference type="ChEBI" id="CHEBI:57945"/>
        <dbReference type="ChEBI" id="CHEBI:90832"/>
        <dbReference type="ChEBI" id="CHEBI:456215"/>
        <dbReference type="EC" id="3.6.1.22"/>
    </reaction>
</comment>
<comment type="cofactor">
    <cofactor evidence="1">
        <name>Mg(2+)</name>
        <dbReference type="ChEBI" id="CHEBI:18420"/>
    </cofactor>
    <cofactor evidence="1">
        <name>Mn(2+)</name>
        <dbReference type="ChEBI" id="CHEBI:29035"/>
    </cofactor>
    <text evidence="1">Divalent metal cations. Mg(2+) or Mn(2+).</text>
</comment>
<comment type="cofactor">
    <cofactor evidence="1">
        <name>Zn(2+)</name>
        <dbReference type="ChEBI" id="CHEBI:29105"/>
    </cofactor>
    <text evidence="1">Binds 1 zinc ion per subunit.</text>
</comment>
<comment type="subunit">
    <text evidence="1">Homodimer.</text>
</comment>
<comment type="similarity">
    <text evidence="1">Belongs to the Nudix hydrolase family. NudC subfamily.</text>
</comment>
<keyword id="KW-0378">Hydrolase</keyword>
<keyword id="KW-0460">Magnesium</keyword>
<keyword id="KW-0464">Manganese</keyword>
<keyword id="KW-0479">Metal-binding</keyword>
<keyword id="KW-0520">NAD</keyword>
<keyword id="KW-1185">Reference proteome</keyword>
<keyword id="KW-0862">Zinc</keyword>
<evidence type="ECO:0000255" key="1">
    <source>
        <dbReference type="HAMAP-Rule" id="MF_00297"/>
    </source>
</evidence>
<protein>
    <recommendedName>
        <fullName evidence="1">NAD-capped RNA hydrolase NudC</fullName>
        <shortName evidence="1">DeNADding enzyme NudC</shortName>
        <ecNumber evidence="1">3.6.1.-</ecNumber>
    </recommendedName>
    <alternativeName>
        <fullName evidence="1">NADH pyrophosphatase</fullName>
        <ecNumber evidence="1">3.6.1.22</ecNumber>
    </alternativeName>
</protein>
<reference key="1">
    <citation type="submission" date="2007-08" db="EMBL/GenBank/DDBJ databases">
        <authorList>
            <consortium name="The Citrobacter koseri Genome Sequencing Project"/>
            <person name="McClelland M."/>
            <person name="Sanderson E.K."/>
            <person name="Porwollik S."/>
            <person name="Spieth J."/>
            <person name="Clifton W.S."/>
            <person name="Latreille P."/>
            <person name="Courtney L."/>
            <person name="Wang C."/>
            <person name="Pepin K."/>
            <person name="Bhonagiri V."/>
            <person name="Nash W."/>
            <person name="Johnson M."/>
            <person name="Thiruvilangam P."/>
            <person name="Wilson R."/>
        </authorList>
    </citation>
    <scope>NUCLEOTIDE SEQUENCE [LARGE SCALE GENOMIC DNA]</scope>
    <source>
        <strain>ATCC BAA-895 / CDC 4225-83 / SGSC4696</strain>
    </source>
</reference>
<gene>
    <name evidence="1" type="primary">nudC</name>
    <name type="ordered locus">CKO_02990</name>
</gene>
<proteinExistence type="inferred from homology"/>
<organism>
    <name type="scientific">Citrobacter koseri (strain ATCC BAA-895 / CDC 4225-83 / SGSC4696)</name>
    <dbReference type="NCBI Taxonomy" id="290338"/>
    <lineage>
        <taxon>Bacteria</taxon>
        <taxon>Pseudomonadati</taxon>
        <taxon>Pseudomonadota</taxon>
        <taxon>Gammaproteobacteria</taxon>
        <taxon>Enterobacterales</taxon>
        <taxon>Enterobacteriaceae</taxon>
        <taxon>Citrobacter</taxon>
    </lineage>
</organism>